<gene>
    <name evidence="1" type="primary">groES</name>
    <name evidence="1" type="synonym">groS</name>
    <name type="ordered locus">CGSHiEE_00280</name>
</gene>
<feature type="chain" id="PRO_1000025267" description="Co-chaperonin GroES">
    <location>
        <begin position="1"/>
        <end position="96"/>
    </location>
</feature>
<name>CH10_HAEIE</name>
<accession>A5U9V3</accession>
<keyword id="KW-0143">Chaperone</keyword>
<keyword id="KW-0963">Cytoplasm</keyword>
<reference key="1">
    <citation type="journal article" date="2007" name="Genome Biol.">
        <title>Characterization and modeling of the Haemophilus influenzae core and supragenomes based on the complete genomic sequences of Rd and 12 clinical nontypeable strains.</title>
        <authorList>
            <person name="Hogg J.S."/>
            <person name="Hu F.Z."/>
            <person name="Janto B."/>
            <person name="Boissy R."/>
            <person name="Hayes J."/>
            <person name="Keefe R."/>
            <person name="Post J.C."/>
            <person name="Ehrlich G.D."/>
        </authorList>
    </citation>
    <scope>NUCLEOTIDE SEQUENCE [LARGE SCALE GENOMIC DNA]</scope>
    <source>
        <strain>PittEE</strain>
    </source>
</reference>
<dbReference type="EMBL" id="CP000671">
    <property type="protein sequence ID" value="ABQ97554.1"/>
    <property type="molecule type" value="Genomic_DNA"/>
</dbReference>
<dbReference type="SMR" id="A5U9V3"/>
<dbReference type="KEGG" id="hip:CGSHiEE_00280"/>
<dbReference type="HOGENOM" id="CLU_132825_1_1_6"/>
<dbReference type="GO" id="GO:0005737">
    <property type="term" value="C:cytoplasm"/>
    <property type="evidence" value="ECO:0007669"/>
    <property type="project" value="UniProtKB-SubCell"/>
</dbReference>
<dbReference type="GO" id="GO:0005524">
    <property type="term" value="F:ATP binding"/>
    <property type="evidence" value="ECO:0007669"/>
    <property type="project" value="InterPro"/>
</dbReference>
<dbReference type="GO" id="GO:0046872">
    <property type="term" value="F:metal ion binding"/>
    <property type="evidence" value="ECO:0007669"/>
    <property type="project" value="TreeGrafter"/>
</dbReference>
<dbReference type="GO" id="GO:0044183">
    <property type="term" value="F:protein folding chaperone"/>
    <property type="evidence" value="ECO:0007669"/>
    <property type="project" value="InterPro"/>
</dbReference>
<dbReference type="GO" id="GO:0051087">
    <property type="term" value="F:protein-folding chaperone binding"/>
    <property type="evidence" value="ECO:0007669"/>
    <property type="project" value="TreeGrafter"/>
</dbReference>
<dbReference type="GO" id="GO:0051082">
    <property type="term" value="F:unfolded protein binding"/>
    <property type="evidence" value="ECO:0007669"/>
    <property type="project" value="TreeGrafter"/>
</dbReference>
<dbReference type="GO" id="GO:0051085">
    <property type="term" value="P:chaperone cofactor-dependent protein refolding"/>
    <property type="evidence" value="ECO:0007669"/>
    <property type="project" value="TreeGrafter"/>
</dbReference>
<dbReference type="CDD" id="cd00320">
    <property type="entry name" value="cpn10"/>
    <property type="match status" value="1"/>
</dbReference>
<dbReference type="FunFam" id="2.30.33.40:FF:000001">
    <property type="entry name" value="10 kDa chaperonin"/>
    <property type="match status" value="1"/>
</dbReference>
<dbReference type="Gene3D" id="2.30.33.40">
    <property type="entry name" value="GroES chaperonin"/>
    <property type="match status" value="1"/>
</dbReference>
<dbReference type="HAMAP" id="MF_00580">
    <property type="entry name" value="CH10"/>
    <property type="match status" value="1"/>
</dbReference>
<dbReference type="InterPro" id="IPR020818">
    <property type="entry name" value="Chaperonin_GroES"/>
</dbReference>
<dbReference type="InterPro" id="IPR037124">
    <property type="entry name" value="Chaperonin_GroES_sf"/>
</dbReference>
<dbReference type="InterPro" id="IPR018369">
    <property type="entry name" value="Chaprnonin_Cpn10_CS"/>
</dbReference>
<dbReference type="InterPro" id="IPR011032">
    <property type="entry name" value="GroES-like_sf"/>
</dbReference>
<dbReference type="NCBIfam" id="NF001526">
    <property type="entry name" value="PRK00364.1-1"/>
    <property type="match status" value="1"/>
</dbReference>
<dbReference type="NCBIfam" id="NF001531">
    <property type="entry name" value="PRK00364.2-2"/>
    <property type="match status" value="1"/>
</dbReference>
<dbReference type="PANTHER" id="PTHR10772">
    <property type="entry name" value="10 KDA HEAT SHOCK PROTEIN"/>
    <property type="match status" value="1"/>
</dbReference>
<dbReference type="PANTHER" id="PTHR10772:SF58">
    <property type="entry name" value="CO-CHAPERONIN GROES"/>
    <property type="match status" value="1"/>
</dbReference>
<dbReference type="Pfam" id="PF00166">
    <property type="entry name" value="Cpn10"/>
    <property type="match status" value="1"/>
</dbReference>
<dbReference type="PRINTS" id="PR00297">
    <property type="entry name" value="CHAPERONIN10"/>
</dbReference>
<dbReference type="SMART" id="SM00883">
    <property type="entry name" value="Cpn10"/>
    <property type="match status" value="1"/>
</dbReference>
<dbReference type="SUPFAM" id="SSF50129">
    <property type="entry name" value="GroES-like"/>
    <property type="match status" value="1"/>
</dbReference>
<dbReference type="PROSITE" id="PS00681">
    <property type="entry name" value="CHAPERONINS_CPN10"/>
    <property type="match status" value="1"/>
</dbReference>
<protein>
    <recommendedName>
        <fullName evidence="1">Co-chaperonin GroES</fullName>
    </recommendedName>
    <alternativeName>
        <fullName evidence="1">10 kDa chaperonin</fullName>
    </alternativeName>
    <alternativeName>
        <fullName evidence="1">Chaperonin-10</fullName>
        <shortName evidence="1">Cpn10</shortName>
    </alternativeName>
</protein>
<evidence type="ECO:0000255" key="1">
    <source>
        <dbReference type="HAMAP-Rule" id="MF_00580"/>
    </source>
</evidence>
<proteinExistence type="inferred from homology"/>
<sequence>MNIRPLHDRVIIKREEVETRSAGGIVLTGSAATKSTRAKVLAVGKGRILENGTVQPLDVKVGDTVIFNDGYGVKSEKIDGEEVLIISENDILAIVE</sequence>
<comment type="function">
    <text evidence="1">Together with the chaperonin GroEL, plays an essential role in assisting protein folding. The GroEL-GroES system forms a nano-cage that allows encapsulation of the non-native substrate proteins and provides a physical environment optimized to promote and accelerate protein folding. GroES binds to the apical surface of the GroEL ring, thereby capping the opening of the GroEL channel.</text>
</comment>
<comment type="subunit">
    <text evidence="1">Heptamer of 7 subunits arranged in a ring. Interacts with the chaperonin GroEL.</text>
</comment>
<comment type="subcellular location">
    <subcellularLocation>
        <location evidence="1">Cytoplasm</location>
    </subcellularLocation>
</comment>
<comment type="similarity">
    <text evidence="1">Belongs to the GroES chaperonin family.</text>
</comment>
<organism>
    <name type="scientific">Haemophilus influenzae (strain PittEE)</name>
    <dbReference type="NCBI Taxonomy" id="374930"/>
    <lineage>
        <taxon>Bacteria</taxon>
        <taxon>Pseudomonadati</taxon>
        <taxon>Pseudomonadota</taxon>
        <taxon>Gammaproteobacteria</taxon>
        <taxon>Pasteurellales</taxon>
        <taxon>Pasteurellaceae</taxon>
        <taxon>Haemophilus</taxon>
    </lineage>
</organism>